<gene>
    <name evidence="2" type="primary">ddl</name>
    <name type="ordered locus">Ssed_1920</name>
</gene>
<dbReference type="EC" id="6.3.2.4" evidence="2"/>
<dbReference type="EMBL" id="CP000821">
    <property type="protein sequence ID" value="ABV36531.1"/>
    <property type="molecule type" value="Genomic_DNA"/>
</dbReference>
<dbReference type="RefSeq" id="WP_012142266.1">
    <property type="nucleotide sequence ID" value="NC_009831.1"/>
</dbReference>
<dbReference type="SMR" id="A8FUK8"/>
<dbReference type="STRING" id="425104.Ssed_1920"/>
<dbReference type="KEGG" id="sse:Ssed_1920"/>
<dbReference type="eggNOG" id="COG1181">
    <property type="taxonomic scope" value="Bacteria"/>
</dbReference>
<dbReference type="HOGENOM" id="CLU_039268_0_0_6"/>
<dbReference type="OrthoDB" id="9813261at2"/>
<dbReference type="UniPathway" id="UPA00219"/>
<dbReference type="Proteomes" id="UP000002015">
    <property type="component" value="Chromosome"/>
</dbReference>
<dbReference type="GO" id="GO:0005829">
    <property type="term" value="C:cytosol"/>
    <property type="evidence" value="ECO:0007669"/>
    <property type="project" value="TreeGrafter"/>
</dbReference>
<dbReference type="GO" id="GO:0005524">
    <property type="term" value="F:ATP binding"/>
    <property type="evidence" value="ECO:0007669"/>
    <property type="project" value="UniProtKB-KW"/>
</dbReference>
<dbReference type="GO" id="GO:0008716">
    <property type="term" value="F:D-alanine-D-alanine ligase activity"/>
    <property type="evidence" value="ECO:0007669"/>
    <property type="project" value="UniProtKB-UniRule"/>
</dbReference>
<dbReference type="GO" id="GO:0046872">
    <property type="term" value="F:metal ion binding"/>
    <property type="evidence" value="ECO:0007669"/>
    <property type="project" value="UniProtKB-KW"/>
</dbReference>
<dbReference type="GO" id="GO:0071555">
    <property type="term" value="P:cell wall organization"/>
    <property type="evidence" value="ECO:0007669"/>
    <property type="project" value="UniProtKB-KW"/>
</dbReference>
<dbReference type="GO" id="GO:0009252">
    <property type="term" value="P:peptidoglycan biosynthetic process"/>
    <property type="evidence" value="ECO:0007669"/>
    <property type="project" value="UniProtKB-UniRule"/>
</dbReference>
<dbReference type="GO" id="GO:0008360">
    <property type="term" value="P:regulation of cell shape"/>
    <property type="evidence" value="ECO:0007669"/>
    <property type="project" value="UniProtKB-KW"/>
</dbReference>
<dbReference type="Gene3D" id="3.40.50.20">
    <property type="match status" value="1"/>
</dbReference>
<dbReference type="Gene3D" id="3.30.1490.20">
    <property type="entry name" value="ATP-grasp fold, A domain"/>
    <property type="match status" value="1"/>
</dbReference>
<dbReference type="Gene3D" id="3.30.470.20">
    <property type="entry name" value="ATP-grasp fold, B domain"/>
    <property type="match status" value="1"/>
</dbReference>
<dbReference type="HAMAP" id="MF_00047">
    <property type="entry name" value="Dala_Dala_lig"/>
    <property type="match status" value="1"/>
</dbReference>
<dbReference type="InterPro" id="IPR011761">
    <property type="entry name" value="ATP-grasp"/>
</dbReference>
<dbReference type="InterPro" id="IPR013815">
    <property type="entry name" value="ATP_grasp_subdomain_1"/>
</dbReference>
<dbReference type="InterPro" id="IPR000291">
    <property type="entry name" value="D-Ala_lig_Van_CS"/>
</dbReference>
<dbReference type="InterPro" id="IPR005905">
    <property type="entry name" value="D_ala_D_ala"/>
</dbReference>
<dbReference type="InterPro" id="IPR011095">
    <property type="entry name" value="Dala_Dala_lig_C"/>
</dbReference>
<dbReference type="InterPro" id="IPR011127">
    <property type="entry name" value="Dala_Dala_lig_N"/>
</dbReference>
<dbReference type="InterPro" id="IPR016185">
    <property type="entry name" value="PreATP-grasp_dom_sf"/>
</dbReference>
<dbReference type="NCBIfam" id="TIGR01205">
    <property type="entry name" value="D_ala_D_alaTIGR"/>
    <property type="match status" value="1"/>
</dbReference>
<dbReference type="NCBIfam" id="NF002527">
    <property type="entry name" value="PRK01966.1-3"/>
    <property type="match status" value="1"/>
</dbReference>
<dbReference type="NCBIfam" id="NF002528">
    <property type="entry name" value="PRK01966.1-4"/>
    <property type="match status" value="1"/>
</dbReference>
<dbReference type="PANTHER" id="PTHR23132">
    <property type="entry name" value="D-ALANINE--D-ALANINE LIGASE"/>
    <property type="match status" value="1"/>
</dbReference>
<dbReference type="PANTHER" id="PTHR23132:SF25">
    <property type="entry name" value="D-ALANINE--D-ALANINE LIGASE A"/>
    <property type="match status" value="1"/>
</dbReference>
<dbReference type="Pfam" id="PF07478">
    <property type="entry name" value="Dala_Dala_lig_C"/>
    <property type="match status" value="1"/>
</dbReference>
<dbReference type="Pfam" id="PF01820">
    <property type="entry name" value="Dala_Dala_lig_N"/>
    <property type="match status" value="1"/>
</dbReference>
<dbReference type="PIRSF" id="PIRSF039102">
    <property type="entry name" value="Ddl/VanB"/>
    <property type="match status" value="1"/>
</dbReference>
<dbReference type="SUPFAM" id="SSF56059">
    <property type="entry name" value="Glutathione synthetase ATP-binding domain-like"/>
    <property type="match status" value="1"/>
</dbReference>
<dbReference type="SUPFAM" id="SSF52440">
    <property type="entry name" value="PreATP-grasp domain"/>
    <property type="match status" value="1"/>
</dbReference>
<dbReference type="PROSITE" id="PS50975">
    <property type="entry name" value="ATP_GRASP"/>
    <property type="match status" value="1"/>
</dbReference>
<dbReference type="PROSITE" id="PS00843">
    <property type="entry name" value="DALA_DALA_LIGASE_1"/>
    <property type="match status" value="1"/>
</dbReference>
<dbReference type="PROSITE" id="PS00844">
    <property type="entry name" value="DALA_DALA_LIGASE_2"/>
    <property type="match status" value="1"/>
</dbReference>
<sequence length="333" mass="37415">MSQTNLLLLCGGGGDEHAISLLSANFFETSLADITGFNVLRVELDADGHYHTKDGDICELTNRKQIRFEDESKRPWPVDYVIPCIHGYPGETGDIQSYFELINLPYFGCDSEASRNCFNKVTAKMWFSALGIPNTPYIFLNEFNDDAISQTEQALETWGSVFIKAASQGSSVGCYRVDSIDELASSLKEAFSYSPYVVVEKTIHARELEVAAYELDGEIVATKPGEIICASNTFYTFDEKYAADSQAETKVEADISDELSREIREYAVKVFKGMKLSHLSRIDFFLTDENEILLNEINTFPGLTPISMFPKMLQNHGDDFTEYLYSNIKSQLI</sequence>
<comment type="function">
    <text evidence="2">Cell wall formation.</text>
</comment>
<comment type="catalytic activity">
    <reaction evidence="2">
        <text>2 D-alanine + ATP = D-alanyl-D-alanine + ADP + phosphate + H(+)</text>
        <dbReference type="Rhea" id="RHEA:11224"/>
        <dbReference type="ChEBI" id="CHEBI:15378"/>
        <dbReference type="ChEBI" id="CHEBI:30616"/>
        <dbReference type="ChEBI" id="CHEBI:43474"/>
        <dbReference type="ChEBI" id="CHEBI:57416"/>
        <dbReference type="ChEBI" id="CHEBI:57822"/>
        <dbReference type="ChEBI" id="CHEBI:456216"/>
        <dbReference type="EC" id="6.3.2.4"/>
    </reaction>
</comment>
<comment type="cofactor">
    <cofactor evidence="1">
        <name>Mg(2+)</name>
        <dbReference type="ChEBI" id="CHEBI:18420"/>
    </cofactor>
    <cofactor evidence="1">
        <name>Mn(2+)</name>
        <dbReference type="ChEBI" id="CHEBI:29035"/>
    </cofactor>
    <text evidence="1">Binds 2 magnesium or manganese ions per subunit.</text>
</comment>
<comment type="pathway">
    <text evidence="2">Cell wall biogenesis; peptidoglycan biosynthesis.</text>
</comment>
<comment type="subcellular location">
    <subcellularLocation>
        <location evidence="2">Cytoplasm</location>
    </subcellularLocation>
</comment>
<comment type="similarity">
    <text evidence="2">Belongs to the D-alanine--D-alanine ligase family.</text>
</comment>
<proteinExistence type="inferred from homology"/>
<evidence type="ECO:0000250" key="1"/>
<evidence type="ECO:0000255" key="2">
    <source>
        <dbReference type="HAMAP-Rule" id="MF_00047"/>
    </source>
</evidence>
<organism>
    <name type="scientific">Shewanella sediminis (strain HAW-EB3)</name>
    <dbReference type="NCBI Taxonomy" id="425104"/>
    <lineage>
        <taxon>Bacteria</taxon>
        <taxon>Pseudomonadati</taxon>
        <taxon>Pseudomonadota</taxon>
        <taxon>Gammaproteobacteria</taxon>
        <taxon>Alteromonadales</taxon>
        <taxon>Shewanellaceae</taxon>
        <taxon>Shewanella</taxon>
    </lineage>
</organism>
<feature type="chain" id="PRO_1000074793" description="D-alanine--D-alanine ligase">
    <location>
        <begin position="1"/>
        <end position="333"/>
    </location>
</feature>
<feature type="domain" description="ATP-grasp" evidence="2">
    <location>
        <begin position="124"/>
        <end position="329"/>
    </location>
</feature>
<feature type="binding site" evidence="2">
    <location>
        <begin position="154"/>
        <end position="209"/>
    </location>
    <ligand>
        <name>ATP</name>
        <dbReference type="ChEBI" id="CHEBI:30616"/>
    </ligand>
</feature>
<feature type="binding site" evidence="2">
    <location>
        <position position="283"/>
    </location>
    <ligand>
        <name>Mg(2+)</name>
        <dbReference type="ChEBI" id="CHEBI:18420"/>
        <label>1</label>
    </ligand>
</feature>
<feature type="binding site" evidence="2">
    <location>
        <position position="296"/>
    </location>
    <ligand>
        <name>Mg(2+)</name>
        <dbReference type="ChEBI" id="CHEBI:18420"/>
        <label>1</label>
    </ligand>
</feature>
<feature type="binding site" evidence="2">
    <location>
        <position position="296"/>
    </location>
    <ligand>
        <name>Mg(2+)</name>
        <dbReference type="ChEBI" id="CHEBI:18420"/>
        <label>2</label>
    </ligand>
</feature>
<feature type="binding site" evidence="2">
    <location>
        <position position="298"/>
    </location>
    <ligand>
        <name>Mg(2+)</name>
        <dbReference type="ChEBI" id="CHEBI:18420"/>
        <label>2</label>
    </ligand>
</feature>
<keyword id="KW-0067">ATP-binding</keyword>
<keyword id="KW-0133">Cell shape</keyword>
<keyword id="KW-0961">Cell wall biogenesis/degradation</keyword>
<keyword id="KW-0963">Cytoplasm</keyword>
<keyword id="KW-0436">Ligase</keyword>
<keyword id="KW-0460">Magnesium</keyword>
<keyword id="KW-0464">Manganese</keyword>
<keyword id="KW-0479">Metal-binding</keyword>
<keyword id="KW-0547">Nucleotide-binding</keyword>
<keyword id="KW-0573">Peptidoglycan synthesis</keyword>
<keyword id="KW-1185">Reference proteome</keyword>
<accession>A8FUK8</accession>
<name>DDL_SHESH</name>
<reference key="1">
    <citation type="submission" date="2007-08" db="EMBL/GenBank/DDBJ databases">
        <title>Complete sequence of Shewanella sediminis HAW-EB3.</title>
        <authorList>
            <consortium name="US DOE Joint Genome Institute"/>
            <person name="Copeland A."/>
            <person name="Lucas S."/>
            <person name="Lapidus A."/>
            <person name="Barry K."/>
            <person name="Glavina del Rio T."/>
            <person name="Dalin E."/>
            <person name="Tice H."/>
            <person name="Pitluck S."/>
            <person name="Chertkov O."/>
            <person name="Brettin T."/>
            <person name="Bruce D."/>
            <person name="Detter J.C."/>
            <person name="Han C."/>
            <person name="Schmutz J."/>
            <person name="Larimer F."/>
            <person name="Land M."/>
            <person name="Hauser L."/>
            <person name="Kyrpides N."/>
            <person name="Kim E."/>
            <person name="Zhao J.-S."/>
            <person name="Richardson P."/>
        </authorList>
    </citation>
    <scope>NUCLEOTIDE SEQUENCE [LARGE SCALE GENOMIC DNA]</scope>
    <source>
        <strain>HAW-EB3</strain>
    </source>
</reference>
<protein>
    <recommendedName>
        <fullName evidence="2">D-alanine--D-alanine ligase</fullName>
        <ecNumber evidence="2">6.3.2.4</ecNumber>
    </recommendedName>
    <alternativeName>
        <fullName evidence="2">D-Ala-D-Ala ligase</fullName>
    </alternativeName>
    <alternativeName>
        <fullName evidence="2">D-alanylalanine synthetase</fullName>
    </alternativeName>
</protein>